<reference key="1">
    <citation type="journal article" date="2011" name="Proc. Natl. Acad. Sci. U.S.A.">
        <title>Genomic anatomy of Escherichia coli O157:H7 outbreaks.</title>
        <authorList>
            <person name="Eppinger M."/>
            <person name="Mammel M.K."/>
            <person name="Leclerc J.E."/>
            <person name="Ravel J."/>
            <person name="Cebula T.A."/>
        </authorList>
    </citation>
    <scope>NUCLEOTIDE SEQUENCE [LARGE SCALE GENOMIC DNA]</scope>
    <source>
        <strain>EC4115 / EHEC</strain>
    </source>
</reference>
<dbReference type="EMBL" id="CP001164">
    <property type="protein sequence ID" value="ACI35342.1"/>
    <property type="molecule type" value="Genomic_DNA"/>
</dbReference>
<dbReference type="RefSeq" id="WP_000973673.1">
    <property type="nucleotide sequence ID" value="NC_011353.1"/>
</dbReference>
<dbReference type="SMR" id="B5Z177"/>
<dbReference type="KEGG" id="ecf:ECH74115_5517"/>
<dbReference type="HOGENOM" id="CLU_032473_4_1_6"/>
<dbReference type="GO" id="GO:0009279">
    <property type="term" value="C:cell outer membrane"/>
    <property type="evidence" value="ECO:0007669"/>
    <property type="project" value="UniProtKB-SubCell"/>
</dbReference>
<dbReference type="GO" id="GO:0046930">
    <property type="term" value="C:pore complex"/>
    <property type="evidence" value="ECO:0007669"/>
    <property type="project" value="UniProtKB-KW"/>
</dbReference>
<dbReference type="GO" id="GO:0042958">
    <property type="term" value="F:maltodextrin transmembrane transporter activity"/>
    <property type="evidence" value="ECO:0007669"/>
    <property type="project" value="InterPro"/>
</dbReference>
<dbReference type="GO" id="GO:0015481">
    <property type="term" value="F:maltose transporting porin activity"/>
    <property type="evidence" value="ECO:0007669"/>
    <property type="project" value="InterPro"/>
</dbReference>
<dbReference type="GO" id="GO:0006811">
    <property type="term" value="P:monoatomic ion transport"/>
    <property type="evidence" value="ECO:0007669"/>
    <property type="project" value="UniProtKB-KW"/>
</dbReference>
<dbReference type="CDD" id="cd01346">
    <property type="entry name" value="Maltoporin-like"/>
    <property type="match status" value="1"/>
</dbReference>
<dbReference type="FunFam" id="2.40.170.10:FF:000001">
    <property type="entry name" value="Maltoporin"/>
    <property type="match status" value="1"/>
</dbReference>
<dbReference type="Gene3D" id="2.40.170.10">
    <property type="entry name" value="Porin, LamB type"/>
    <property type="match status" value="1"/>
</dbReference>
<dbReference type="HAMAP" id="MF_01301">
    <property type="entry name" value="LamB"/>
    <property type="match status" value="1"/>
</dbReference>
<dbReference type="InterPro" id="IPR050286">
    <property type="entry name" value="G_neg_Bact_CarbUptk_Porin"/>
</dbReference>
<dbReference type="InterPro" id="IPR023738">
    <property type="entry name" value="Maltoporin"/>
</dbReference>
<dbReference type="InterPro" id="IPR003192">
    <property type="entry name" value="Porin_LamB"/>
</dbReference>
<dbReference type="InterPro" id="IPR036998">
    <property type="entry name" value="Porin_LamB_sf"/>
</dbReference>
<dbReference type="NCBIfam" id="NF006860">
    <property type="entry name" value="PRK09360.1"/>
    <property type="match status" value="1"/>
</dbReference>
<dbReference type="PANTHER" id="PTHR38762">
    <property type="entry name" value="CRYPTIC OUTER MEMBRANE PORIN BGLH-RELATED"/>
    <property type="match status" value="1"/>
</dbReference>
<dbReference type="PANTHER" id="PTHR38762:SF1">
    <property type="entry name" value="CRYPTIC OUTER MEMBRANE PORIN BGLH-RELATED"/>
    <property type="match status" value="1"/>
</dbReference>
<dbReference type="Pfam" id="PF02264">
    <property type="entry name" value="LamB"/>
    <property type="match status" value="1"/>
</dbReference>
<dbReference type="SUPFAM" id="SSF56935">
    <property type="entry name" value="Porins"/>
    <property type="match status" value="1"/>
</dbReference>
<accession>B5Z177</accession>
<organism>
    <name type="scientific">Escherichia coli O157:H7 (strain EC4115 / EHEC)</name>
    <dbReference type="NCBI Taxonomy" id="444450"/>
    <lineage>
        <taxon>Bacteria</taxon>
        <taxon>Pseudomonadati</taxon>
        <taxon>Pseudomonadota</taxon>
        <taxon>Gammaproteobacteria</taxon>
        <taxon>Enterobacterales</taxon>
        <taxon>Enterobacteriaceae</taxon>
        <taxon>Escherichia</taxon>
    </lineage>
</organism>
<evidence type="ECO:0000255" key="1">
    <source>
        <dbReference type="HAMAP-Rule" id="MF_01301"/>
    </source>
</evidence>
<keyword id="KW-0998">Cell outer membrane</keyword>
<keyword id="KW-0406">Ion transport</keyword>
<keyword id="KW-0472">Membrane</keyword>
<keyword id="KW-0626">Porin</keyword>
<keyword id="KW-0732">Signal</keyword>
<keyword id="KW-0762">Sugar transport</keyword>
<keyword id="KW-0812">Transmembrane</keyword>
<keyword id="KW-1134">Transmembrane beta strand</keyword>
<keyword id="KW-0813">Transport</keyword>
<name>LAMB_ECO5E</name>
<comment type="function">
    <text evidence="1">Involved in the transport of maltose and maltodextrins.</text>
</comment>
<comment type="catalytic activity">
    <reaction evidence="1">
        <text>beta-maltose(in) = beta-maltose(out)</text>
        <dbReference type="Rhea" id="RHEA:29731"/>
        <dbReference type="ChEBI" id="CHEBI:18147"/>
    </reaction>
</comment>
<comment type="subunit">
    <text evidence="1">Homotrimer formed of three 18-stranded antiparallel beta-barrels, containing three independent channels.</text>
</comment>
<comment type="subcellular location">
    <subcellularLocation>
        <location evidence="1">Cell outer membrane</location>
        <topology evidence="1">Multi-pass membrane protein</topology>
    </subcellularLocation>
</comment>
<comment type="induction">
    <text evidence="1">By maltose.</text>
</comment>
<comment type="similarity">
    <text evidence="1">Belongs to the porin LamB (TC 1.B.3) family.</text>
</comment>
<sequence>MMITLRKLPLAVAVAAGVMSAQAMAVDFHGYARSGIGWTGSGGEQQCFQTTGAQSKYRLGNECETYAELKLGQEVWKEGDKSFYFDTNVAYSVAQQNDWEATDPAFREANVQGKNLIEWLPGSTIWAGKRFYQRHDVHMIDFYYWDISGPGAGLENIDVGFGKLSLAATRSSEAGGSSSFASNNIYDYTNETANDVFDVRLAQMEVNPGGTLELGVDYGRANLRDNYRLVDGASKDGWLFTAEHTQSVLKGFNKFVVQYATDSMTSQGKGLSQGSGVAFDNEKFAYNINNNGHMLRILDHGAISMGDNWDMMYVGMYQDINWDNDNGTKWWTVGIRPMYKWTPIMSTVMEIGYDNVESQRTGDKNNQYKITLAQQWQAGDSIWSRPAIRVFATYAKWDEKWGYDYNGDSKVNPNYGKAVPADFNGGSFGRGDSDEWTFGAQMEIWW</sequence>
<protein>
    <recommendedName>
        <fullName evidence="1">Maltoporin</fullName>
    </recommendedName>
    <alternativeName>
        <fullName evidence="1">Maltose-inducible porin</fullName>
    </alternativeName>
</protein>
<feature type="signal peptide" evidence="1">
    <location>
        <begin position="1"/>
        <end position="25"/>
    </location>
</feature>
<feature type="chain" id="PRO_1000140481" description="Maltoporin">
    <location>
        <begin position="26"/>
        <end position="446"/>
    </location>
</feature>
<feature type="site" description="Greasy slide, important in sugar transport" evidence="1">
    <location>
        <position position="31"/>
    </location>
</feature>
<feature type="site" description="Greasy slide, important in sugar transport" evidence="1">
    <location>
        <position position="66"/>
    </location>
</feature>
<feature type="site" description="Greasy slide, important in sugar transport" evidence="1">
    <location>
        <position position="99"/>
    </location>
</feature>
<feature type="site" description="Important in sugar transport" evidence="1">
    <location>
        <position position="143"/>
    </location>
</feature>
<feature type="site" description="Greasy slide, important in sugar transport" evidence="1">
    <location>
        <position position="252"/>
    </location>
</feature>
<feature type="site" description="Greasy slide, important in sugar transport" evidence="1">
    <location>
        <position position="383"/>
    </location>
</feature>
<feature type="site" description="Greasy slide, important in sugar transport" evidence="1">
    <location>
        <position position="445"/>
    </location>
</feature>
<gene>
    <name evidence="1" type="primary">lamB</name>
    <name type="ordered locus">ECH74115_5517</name>
</gene>
<proteinExistence type="inferred from homology"/>